<comment type="similarity">
    <text evidence="1">Belongs to the UPF0354 family.</text>
</comment>
<organism>
    <name type="scientific">Bacillus pumilus (strain SAFR-032)</name>
    <dbReference type="NCBI Taxonomy" id="315750"/>
    <lineage>
        <taxon>Bacteria</taxon>
        <taxon>Bacillati</taxon>
        <taxon>Bacillota</taxon>
        <taxon>Bacilli</taxon>
        <taxon>Bacillales</taxon>
        <taxon>Bacillaceae</taxon>
        <taxon>Bacillus</taxon>
    </lineage>
</organism>
<evidence type="ECO:0000255" key="1">
    <source>
        <dbReference type="HAMAP-Rule" id="MF_01548"/>
    </source>
</evidence>
<protein>
    <recommendedName>
        <fullName evidence="1">UPF0354 protein BPUM_2629</fullName>
    </recommendedName>
</protein>
<sequence length="270" mass="30901">MAKMTSRQLANELKSRLTNDNWSHQFDREKDTLRIEDKQTGKGITLELPPIIAKWEVKPDETLDEIVYYVKEALSAMKGEAQHISGKEKQIYPVIRSTSFPEASSDGIPLVFDEHTAETRIYYALDLGSTYRLIDEKMLQKENWTKERIRETASFNVRSLETVVKMDEVAGNRFYFFRANDGYDASRLLNESILQEYAQKIEGQMAISVPHQDVFIIADVCNESGYDILGQMSMSFFASGTVPITALSFLYDEGKLEPIFILAKSRPKQQ</sequence>
<name>Y2629_BACP2</name>
<proteinExistence type="inferred from homology"/>
<reference key="1">
    <citation type="journal article" date="2007" name="PLoS ONE">
        <title>Paradoxical DNA repair and peroxide resistance gene conservation in Bacillus pumilus SAFR-032.</title>
        <authorList>
            <person name="Gioia J."/>
            <person name="Yerrapragada S."/>
            <person name="Qin X."/>
            <person name="Jiang H."/>
            <person name="Igboeli O.C."/>
            <person name="Muzny D."/>
            <person name="Dugan-Rocha S."/>
            <person name="Ding Y."/>
            <person name="Hawes A."/>
            <person name="Liu W."/>
            <person name="Perez L."/>
            <person name="Kovar C."/>
            <person name="Dinh H."/>
            <person name="Lee S."/>
            <person name="Nazareth L."/>
            <person name="Blyth P."/>
            <person name="Holder M."/>
            <person name="Buhay C."/>
            <person name="Tirumalai M.R."/>
            <person name="Liu Y."/>
            <person name="Dasgupta I."/>
            <person name="Bokhetache L."/>
            <person name="Fujita M."/>
            <person name="Karouia F."/>
            <person name="Eswara Moorthy P."/>
            <person name="Siefert J."/>
            <person name="Uzman A."/>
            <person name="Buzumbo P."/>
            <person name="Verma A."/>
            <person name="Zwiya H."/>
            <person name="McWilliams B.D."/>
            <person name="Olowu A."/>
            <person name="Clinkenbeard K.D."/>
            <person name="Newcombe D."/>
            <person name="Golebiewski L."/>
            <person name="Petrosino J.F."/>
            <person name="Nicholson W.L."/>
            <person name="Fox G.E."/>
            <person name="Venkateswaran K."/>
            <person name="Highlander S.K."/>
            <person name="Weinstock G.M."/>
        </authorList>
    </citation>
    <scope>NUCLEOTIDE SEQUENCE [LARGE SCALE GENOMIC DNA]</scope>
    <source>
        <strain>SAFR-032</strain>
    </source>
</reference>
<gene>
    <name type="ordered locus">BPUM_2629</name>
</gene>
<dbReference type="EMBL" id="CP000813">
    <property type="protein sequence ID" value="ABV63287.1"/>
    <property type="molecule type" value="Genomic_DNA"/>
</dbReference>
<dbReference type="RefSeq" id="WP_012010923.1">
    <property type="nucleotide sequence ID" value="NC_009848.4"/>
</dbReference>
<dbReference type="STRING" id="315750.BPUM_2629"/>
<dbReference type="GeneID" id="5621894"/>
<dbReference type="KEGG" id="bpu:BPUM_2629"/>
<dbReference type="eggNOG" id="COG4848">
    <property type="taxonomic scope" value="Bacteria"/>
</dbReference>
<dbReference type="HOGENOM" id="CLU_085634_0_0_9"/>
<dbReference type="OrthoDB" id="154553at2"/>
<dbReference type="Proteomes" id="UP000001355">
    <property type="component" value="Chromosome"/>
</dbReference>
<dbReference type="HAMAP" id="MF_01548">
    <property type="entry name" value="UPF0354"/>
    <property type="match status" value="1"/>
</dbReference>
<dbReference type="InterPro" id="IPR010838">
    <property type="entry name" value="DUF1444"/>
</dbReference>
<dbReference type="NCBIfam" id="NF010189">
    <property type="entry name" value="PRK13668.1"/>
    <property type="match status" value="1"/>
</dbReference>
<dbReference type="Pfam" id="PF07285">
    <property type="entry name" value="DUF1444"/>
    <property type="match status" value="1"/>
</dbReference>
<dbReference type="PIRSF" id="PIRSF012562">
    <property type="entry name" value="UCP012562"/>
    <property type="match status" value="1"/>
</dbReference>
<accession>A8FGC0</accession>
<feature type="chain" id="PRO_0000318614" description="UPF0354 protein BPUM_2629">
    <location>
        <begin position="1"/>
        <end position="270"/>
    </location>
</feature>